<reference key="1">
    <citation type="journal article" date="2007" name="J. Bacteriol.">
        <title>Genome sequence of Avery's virulent serotype 2 strain D39 of Streptococcus pneumoniae and comparison with that of unencapsulated laboratory strain R6.</title>
        <authorList>
            <person name="Lanie J.A."/>
            <person name="Ng W.-L."/>
            <person name="Kazmierczak K.M."/>
            <person name="Andrzejewski T.M."/>
            <person name="Davidsen T.M."/>
            <person name="Wayne K.J."/>
            <person name="Tettelin H."/>
            <person name="Glass J.I."/>
            <person name="Winkler M.E."/>
        </authorList>
    </citation>
    <scope>NUCLEOTIDE SEQUENCE [LARGE SCALE GENOMIC DNA]</scope>
    <source>
        <strain>D39 / NCTC 7466</strain>
    </source>
</reference>
<name>YQGF_STRP2</name>
<evidence type="ECO:0000255" key="1">
    <source>
        <dbReference type="HAMAP-Rule" id="MF_00651"/>
    </source>
</evidence>
<gene>
    <name type="ordered locus">SPD_0181</name>
</gene>
<comment type="function">
    <text evidence="1">Could be a nuclease involved in processing of the 5'-end of pre-16S rRNA.</text>
</comment>
<comment type="subcellular location">
    <subcellularLocation>
        <location evidence="1">Cytoplasm</location>
    </subcellularLocation>
</comment>
<comment type="similarity">
    <text evidence="1">Belongs to the YqgF nuclease family.</text>
</comment>
<sequence>MRIMGLDVGSKTVGVAISDPLGFTAQGLEIIQINEEQGQFGFDRVKELVDTYKVERFVVGLPKNMNNTSGPRVEASQAYGAKLEEFFGLPVDYQDERLTTVAAERMLIEQADISRNKRKKVIDKLAAQLILQNYLDRKF</sequence>
<keyword id="KW-0963">Cytoplasm</keyword>
<keyword id="KW-0378">Hydrolase</keyword>
<keyword id="KW-0540">Nuclease</keyword>
<keyword id="KW-1185">Reference proteome</keyword>
<keyword id="KW-0690">Ribosome biogenesis</keyword>
<proteinExistence type="inferred from homology"/>
<protein>
    <recommendedName>
        <fullName evidence="1">Putative pre-16S rRNA nuclease</fullName>
        <ecNumber evidence="1">3.1.-.-</ecNumber>
    </recommendedName>
</protein>
<organism>
    <name type="scientific">Streptococcus pneumoniae serotype 2 (strain D39 / NCTC 7466)</name>
    <dbReference type="NCBI Taxonomy" id="373153"/>
    <lineage>
        <taxon>Bacteria</taxon>
        <taxon>Bacillati</taxon>
        <taxon>Bacillota</taxon>
        <taxon>Bacilli</taxon>
        <taxon>Lactobacillales</taxon>
        <taxon>Streptococcaceae</taxon>
        <taxon>Streptococcus</taxon>
    </lineage>
</organism>
<accession>Q04MP8</accession>
<feature type="chain" id="PRO_1000061570" description="Putative pre-16S rRNA nuclease">
    <location>
        <begin position="1"/>
        <end position="139"/>
    </location>
</feature>
<dbReference type="EC" id="3.1.-.-" evidence="1"/>
<dbReference type="EMBL" id="CP000410">
    <property type="protein sequence ID" value="ABJ54115.1"/>
    <property type="molecule type" value="Genomic_DNA"/>
</dbReference>
<dbReference type="SMR" id="Q04MP8"/>
<dbReference type="PaxDb" id="373153-SPD_0181"/>
<dbReference type="KEGG" id="spd:SPD_0181"/>
<dbReference type="eggNOG" id="COG0816">
    <property type="taxonomic scope" value="Bacteria"/>
</dbReference>
<dbReference type="HOGENOM" id="CLU_098240_2_0_9"/>
<dbReference type="BioCyc" id="SPNE373153:G1G6V-202-MONOMER"/>
<dbReference type="Proteomes" id="UP000001452">
    <property type="component" value="Chromosome"/>
</dbReference>
<dbReference type="GO" id="GO:0005829">
    <property type="term" value="C:cytosol"/>
    <property type="evidence" value="ECO:0007669"/>
    <property type="project" value="TreeGrafter"/>
</dbReference>
<dbReference type="GO" id="GO:0004518">
    <property type="term" value="F:nuclease activity"/>
    <property type="evidence" value="ECO:0007669"/>
    <property type="project" value="UniProtKB-KW"/>
</dbReference>
<dbReference type="GO" id="GO:0000967">
    <property type="term" value="P:rRNA 5'-end processing"/>
    <property type="evidence" value="ECO:0007669"/>
    <property type="project" value="UniProtKB-UniRule"/>
</dbReference>
<dbReference type="CDD" id="cd16964">
    <property type="entry name" value="YqgF"/>
    <property type="match status" value="1"/>
</dbReference>
<dbReference type="FunFam" id="3.30.420.140:FF:000003">
    <property type="entry name" value="Putative pre-16S rRNA nuclease"/>
    <property type="match status" value="1"/>
</dbReference>
<dbReference type="Gene3D" id="3.30.420.140">
    <property type="entry name" value="YqgF/RNase H-like domain"/>
    <property type="match status" value="1"/>
</dbReference>
<dbReference type="HAMAP" id="MF_00651">
    <property type="entry name" value="Nuclease_YqgF"/>
    <property type="match status" value="1"/>
</dbReference>
<dbReference type="InterPro" id="IPR012337">
    <property type="entry name" value="RNaseH-like_sf"/>
</dbReference>
<dbReference type="InterPro" id="IPR005227">
    <property type="entry name" value="YqgF"/>
</dbReference>
<dbReference type="InterPro" id="IPR006641">
    <property type="entry name" value="YqgF/RNaseH-like_dom"/>
</dbReference>
<dbReference type="InterPro" id="IPR037027">
    <property type="entry name" value="YqgF/RNaseH-like_dom_sf"/>
</dbReference>
<dbReference type="NCBIfam" id="TIGR00250">
    <property type="entry name" value="RNAse_H_YqgF"/>
    <property type="match status" value="1"/>
</dbReference>
<dbReference type="PANTHER" id="PTHR33317">
    <property type="entry name" value="POLYNUCLEOTIDYL TRANSFERASE, RIBONUCLEASE H-LIKE SUPERFAMILY PROTEIN"/>
    <property type="match status" value="1"/>
</dbReference>
<dbReference type="PANTHER" id="PTHR33317:SF4">
    <property type="entry name" value="POLYNUCLEOTIDYL TRANSFERASE, RIBONUCLEASE H-LIKE SUPERFAMILY PROTEIN"/>
    <property type="match status" value="1"/>
</dbReference>
<dbReference type="Pfam" id="PF03652">
    <property type="entry name" value="RuvX"/>
    <property type="match status" value="1"/>
</dbReference>
<dbReference type="SMART" id="SM00732">
    <property type="entry name" value="YqgFc"/>
    <property type="match status" value="1"/>
</dbReference>
<dbReference type="SUPFAM" id="SSF53098">
    <property type="entry name" value="Ribonuclease H-like"/>
    <property type="match status" value="1"/>
</dbReference>